<comment type="function">
    <text evidence="1">May be involved in the trafficking and exocytosis of secretory vesicles in non-neuronal tissues.</text>
</comment>
<comment type="subunit">
    <text evidence="1">Homodimer.</text>
</comment>
<comment type="interaction">
    <interactant intactId="EBI-13373352">
        <id>Q9BQS2-2</id>
    </interactant>
    <interactant intactId="EBI-12935759">
        <id>O15342</id>
        <label>ATP6V0E1</label>
    </interactant>
    <organismsDiffer>false</organismsDiffer>
    <experiments>3</experiments>
</comment>
<comment type="interaction">
    <interactant intactId="EBI-13373352">
        <id>Q9BQS2-2</id>
    </interactant>
    <interactant intactId="EBI-11749983">
        <id>Q9UHP7-3</id>
        <label>CLEC2D</label>
    </interactant>
    <organismsDiffer>false</organismsDiffer>
    <experiments>3</experiments>
</comment>
<comment type="interaction">
    <interactant intactId="EBI-13373352">
        <id>Q9BQS2-2</id>
    </interactant>
    <interactant intactId="EBI-18304435">
        <id>Q5JX71</id>
        <label>FAM209A</label>
    </interactant>
    <organismsDiffer>false</organismsDiffer>
    <experiments>3</experiments>
</comment>
<comment type="interaction">
    <interactant intactId="EBI-13373352">
        <id>Q9BQS2-2</id>
    </interactant>
    <interactant intactId="EBI-13345167">
        <id>Q8TDT2</id>
        <label>GPR152</label>
    </interactant>
    <organismsDiffer>false</organismsDiffer>
    <experiments>3</experiments>
</comment>
<comment type="interaction">
    <interactant intactId="EBI-13373352">
        <id>Q9BQS2-2</id>
    </interactant>
    <interactant intactId="EBI-11721746">
        <id>Q8TED1</id>
        <label>GPX8</label>
    </interactant>
    <organismsDiffer>false</organismsDiffer>
    <experiments>3</experiments>
</comment>
<comment type="interaction">
    <interactant intactId="EBI-13373352">
        <id>Q9BQS2-2</id>
    </interactant>
    <interactant intactId="EBI-466029">
        <id>P42858</id>
        <label>HTT</label>
    </interactant>
    <organismsDiffer>false</organismsDiffer>
    <experiments>3</experiments>
</comment>
<comment type="subcellular location">
    <molecule>Isoform 1</molecule>
    <subcellularLocation>
        <location evidence="1">Cell membrane</location>
        <topology evidence="1">Single-pass type III membrane protein</topology>
    </subcellularLocation>
</comment>
<comment type="subcellular location">
    <molecule>Isoform 2</molecule>
    <subcellularLocation>
        <location evidence="1">Cell membrane</location>
        <topology evidence="1">Single-pass type III membrane protein</topology>
    </subcellularLocation>
</comment>
<comment type="subcellular location">
    <molecule>Isoform 4</molecule>
    <subcellularLocation>
        <location evidence="1">Cell membrane</location>
        <topology evidence="1">Single-pass type III membrane protein</topology>
    </subcellularLocation>
</comment>
<comment type="alternative products">
    <event type="alternative splicing"/>
    <isoform>
        <id>Q9BQS2-1</id>
        <name>1</name>
        <name>Syt XV-a</name>
        <sequence type="displayed"/>
    </isoform>
    <isoform>
        <id>Q9BQS2-2</id>
        <name>2</name>
        <name>Syt XV-b</name>
        <sequence type="described" ref="VSP_008646"/>
    </isoform>
    <isoform>
        <id>Q9BQS2-3</id>
        <name>3</name>
        <sequence type="described" ref="VSP_008643"/>
    </isoform>
    <isoform>
        <id>Q9BQS2-4</id>
        <name>4</name>
        <sequence type="described" ref="VSP_008644 VSP_008645"/>
    </isoform>
</comment>
<comment type="domain">
    <text evidence="1">Neither C2 domains mediates Ca(2+)-dependent or -independent phospholipid binding.</text>
</comment>
<comment type="similarity">
    <text evidence="8">Belongs to the synaptotagmin family.</text>
</comment>
<keyword id="KW-0025">Alternative splicing</keyword>
<keyword id="KW-1003">Cell membrane</keyword>
<keyword id="KW-0472">Membrane</keyword>
<keyword id="KW-1267">Proteomics identification</keyword>
<keyword id="KW-1185">Reference proteome</keyword>
<keyword id="KW-0677">Repeat</keyword>
<keyword id="KW-0735">Signal-anchor</keyword>
<keyword id="KW-0812">Transmembrane</keyword>
<keyword id="KW-1133">Transmembrane helix</keyword>
<organism>
    <name type="scientific">Homo sapiens</name>
    <name type="common">Human</name>
    <dbReference type="NCBI Taxonomy" id="9606"/>
    <lineage>
        <taxon>Eukaryota</taxon>
        <taxon>Metazoa</taxon>
        <taxon>Chordata</taxon>
        <taxon>Craniata</taxon>
        <taxon>Vertebrata</taxon>
        <taxon>Euteleostomi</taxon>
        <taxon>Mammalia</taxon>
        <taxon>Eutheria</taxon>
        <taxon>Euarchontoglires</taxon>
        <taxon>Primates</taxon>
        <taxon>Haplorrhini</taxon>
        <taxon>Catarrhini</taxon>
        <taxon>Hominidae</taxon>
        <taxon>Homo</taxon>
    </lineage>
</organism>
<protein>
    <recommendedName>
        <fullName>Synaptotagmin-15</fullName>
    </recommendedName>
    <alternativeName>
        <fullName>Chr10Syt</fullName>
    </alternativeName>
    <alternativeName>
        <fullName>Synaptotagmin XV</fullName>
        <shortName>SytXV</shortName>
    </alternativeName>
</protein>
<gene>
    <name type="primary">SYT15</name>
</gene>
<dbReference type="EMBL" id="AB109022">
    <property type="protein sequence ID" value="BAC76817.1"/>
    <property type="molecule type" value="mRNA"/>
</dbReference>
<dbReference type="EMBL" id="AB109023">
    <property type="protein sequence ID" value="BAC76818.1"/>
    <property type="molecule type" value="mRNA"/>
</dbReference>
<dbReference type="EMBL" id="AK127436">
    <property type="protein sequence ID" value="BAC86979.1"/>
    <property type="molecule type" value="mRNA"/>
</dbReference>
<dbReference type="EMBL" id="AK131036">
    <property type="protein sequence ID" value="BAC85479.1"/>
    <property type="molecule type" value="mRNA"/>
</dbReference>
<dbReference type="EMBL" id="AL356056">
    <property type="status" value="NOT_ANNOTATED_CDS"/>
    <property type="molecule type" value="Genomic_DNA"/>
</dbReference>
<dbReference type="EMBL" id="BC139914">
    <property type="protein sequence ID" value="AAI39915.1"/>
    <property type="molecule type" value="mRNA"/>
</dbReference>
<dbReference type="EMBL" id="AJ303363">
    <property type="protein sequence ID" value="CAC33885.1"/>
    <property type="molecule type" value="mRNA"/>
</dbReference>
<dbReference type="CCDS" id="CCDS73103.1">
    <molecule id="Q9BQS2-1"/>
</dbReference>
<dbReference type="CCDS" id="CCDS73104.1">
    <molecule id="Q9BQS2-2"/>
</dbReference>
<dbReference type="RefSeq" id="NP_114118.2">
    <molecule id="Q9BQS2-1"/>
    <property type="nucleotide sequence ID" value="NM_031912.4"/>
</dbReference>
<dbReference type="RefSeq" id="NP_852660.1">
    <molecule id="Q9BQS2-2"/>
    <property type="nucleotide sequence ID" value="NM_181519.3"/>
</dbReference>
<dbReference type="RefSeq" id="XP_006718074.1">
    <molecule id="Q9BQS2-2"/>
    <property type="nucleotide sequence ID" value="XM_006718011.3"/>
</dbReference>
<dbReference type="RefSeq" id="XP_006718160.1">
    <property type="nucleotide sequence ID" value="XM_006718097.3"/>
</dbReference>
<dbReference type="RefSeq" id="XP_016872240.1">
    <molecule id="Q9BQS2-2"/>
    <property type="nucleotide sequence ID" value="XM_017016751.3"/>
</dbReference>
<dbReference type="RefSeq" id="XP_016872241.1">
    <property type="nucleotide sequence ID" value="XM_017016752.1"/>
</dbReference>
<dbReference type="RefSeq" id="XP_016872510.1">
    <property type="nucleotide sequence ID" value="XM_017017021.1"/>
</dbReference>
<dbReference type="RefSeq" id="XP_016872512.1">
    <property type="nucleotide sequence ID" value="XM_017017023.1"/>
</dbReference>
<dbReference type="SMR" id="Q9BQS2"/>
<dbReference type="BioGRID" id="123765">
    <property type="interactions" value="10"/>
</dbReference>
<dbReference type="BioGRID" id="3195599">
    <property type="interactions" value="5"/>
</dbReference>
<dbReference type="FunCoup" id="Q9BQS2">
    <property type="interactions" value="13"/>
</dbReference>
<dbReference type="IntAct" id="Q9BQS2">
    <property type="interactions" value="7"/>
</dbReference>
<dbReference type="MINT" id="Q9BQS2"/>
<dbReference type="STRING" id="9606.ENSP00000363441"/>
<dbReference type="iPTMnet" id="Q9BQS2"/>
<dbReference type="PhosphoSitePlus" id="Q9BQS2"/>
<dbReference type="BioMuta" id="SYT15"/>
<dbReference type="DMDM" id="317373506"/>
<dbReference type="MassIVE" id="Q9BQS2"/>
<dbReference type="PaxDb" id="9606-ENSP00000363441"/>
<dbReference type="PeptideAtlas" id="Q9BQS2"/>
<dbReference type="ProteomicsDB" id="78711">
    <molecule id="Q9BQS2-1"/>
</dbReference>
<dbReference type="ProteomicsDB" id="78712">
    <molecule id="Q9BQS2-2"/>
</dbReference>
<dbReference type="ProteomicsDB" id="78713">
    <molecule id="Q9BQS2-3"/>
</dbReference>
<dbReference type="ProteomicsDB" id="78714">
    <molecule id="Q9BQS2-4"/>
</dbReference>
<dbReference type="Antibodypedia" id="66340">
    <property type="antibodies" value="19 antibodies from 10 providers"/>
</dbReference>
<dbReference type="DNASU" id="83849"/>
<dbReference type="Ensembl" id="ENST00000374321.9">
    <molecule id="Q9BQS2-1"/>
    <property type="protein sequence ID" value="ENSP00000363441.4"/>
    <property type="gene ID" value="ENSG00000204176.14"/>
</dbReference>
<dbReference type="Ensembl" id="ENST00000503753.5">
    <molecule id="Q9BQS2-2"/>
    <property type="protein sequence ID" value="ENSP00000427607.1"/>
    <property type="gene ID" value="ENSG00000204176.14"/>
</dbReference>
<dbReference type="GeneID" id="83849"/>
<dbReference type="KEGG" id="hsa:83849"/>
<dbReference type="MANE-Select" id="ENST00000374321.9">
    <property type="protein sequence ID" value="ENSP00000363441.4"/>
    <property type="RefSeq nucleotide sequence ID" value="NM_031912.5"/>
    <property type="RefSeq protein sequence ID" value="NP_114118.2"/>
</dbReference>
<dbReference type="MANE-Select" id="ENST00000615923.4">
    <property type="protein sequence ID" value="ENSP00000478933.3"/>
    <property type="RefSeq nucleotide sequence ID" value="NM_001370184.1"/>
    <property type="RefSeq protein sequence ID" value="NP_001357113.1"/>
</dbReference>
<dbReference type="UCSC" id="uc001jea.4">
    <molecule id="Q9BQS2-1"/>
    <property type="organism name" value="human"/>
</dbReference>
<dbReference type="AGR" id="HGNC:17167"/>
<dbReference type="CTD" id="83849"/>
<dbReference type="DisGeNET" id="83849"/>
<dbReference type="GeneCards" id="SYT15"/>
<dbReference type="HGNC" id="HGNC:17167">
    <property type="gene designation" value="SYT15"/>
</dbReference>
<dbReference type="HPA" id="ENSG00000204176">
    <property type="expression patterns" value="Low tissue specificity"/>
</dbReference>
<dbReference type="MIM" id="608081">
    <property type="type" value="gene"/>
</dbReference>
<dbReference type="neXtProt" id="NX_Q9BQS2"/>
<dbReference type="OpenTargets" id="ENSG00000204176"/>
<dbReference type="OpenTargets" id="ENSG00000277758"/>
<dbReference type="PharmGKB" id="PA134921618"/>
<dbReference type="VEuPathDB" id="HostDB:ENSG00000204176"/>
<dbReference type="eggNOG" id="KOG1028">
    <property type="taxonomic scope" value="Eukaryota"/>
</dbReference>
<dbReference type="GeneTree" id="ENSGT00940000160819"/>
<dbReference type="HOGENOM" id="CLU_023008_11_1_1"/>
<dbReference type="InParanoid" id="Q9BQS2"/>
<dbReference type="OMA" id="LAINSPC"/>
<dbReference type="OrthoDB" id="10259057at2759"/>
<dbReference type="PAN-GO" id="Q9BQS2">
    <property type="GO annotations" value="11 GO annotations based on evolutionary models"/>
</dbReference>
<dbReference type="PhylomeDB" id="Q9BQS2"/>
<dbReference type="TreeFam" id="TF315600"/>
<dbReference type="PathwayCommons" id="Q9BQS2"/>
<dbReference type="SignaLink" id="Q9BQS2"/>
<dbReference type="BioGRID-ORCS" id="102724488">
    <property type="hits" value="0 hits in 4 CRISPR screens"/>
</dbReference>
<dbReference type="BioGRID-ORCS" id="83849">
    <property type="hits" value="139 hits in 1142 CRISPR screens"/>
</dbReference>
<dbReference type="Pharos" id="Q9BQS2">
    <property type="development level" value="Tdark"/>
</dbReference>
<dbReference type="PRO" id="PR:Q9BQS2"/>
<dbReference type="Proteomes" id="UP000005640">
    <property type="component" value="Chromosome 10"/>
</dbReference>
<dbReference type="RNAct" id="Q9BQS2">
    <property type="molecule type" value="protein"/>
</dbReference>
<dbReference type="Bgee" id="ENSG00000204176">
    <property type="expression patterns" value="Expressed in male germ line stem cell (sensu Vertebrata) in testis and 99 other cell types or tissues"/>
</dbReference>
<dbReference type="ExpressionAtlas" id="Q9BQS2">
    <property type="expression patterns" value="baseline and differential"/>
</dbReference>
<dbReference type="GO" id="GO:0070382">
    <property type="term" value="C:exocytic vesicle"/>
    <property type="evidence" value="ECO:0000318"/>
    <property type="project" value="GO_Central"/>
</dbReference>
<dbReference type="GO" id="GO:0005886">
    <property type="term" value="C:plasma membrane"/>
    <property type="evidence" value="ECO:0000318"/>
    <property type="project" value="GO_Central"/>
</dbReference>
<dbReference type="GO" id="GO:0061891">
    <property type="term" value="F:calcium ion sensor activity"/>
    <property type="evidence" value="ECO:0000318"/>
    <property type="project" value="GO_Central"/>
</dbReference>
<dbReference type="GO" id="GO:0005544">
    <property type="term" value="F:calcium-dependent phospholipid binding"/>
    <property type="evidence" value="ECO:0000318"/>
    <property type="project" value="GO_Central"/>
</dbReference>
<dbReference type="GO" id="GO:0000149">
    <property type="term" value="F:SNARE binding"/>
    <property type="evidence" value="ECO:0000318"/>
    <property type="project" value="GO_Central"/>
</dbReference>
<dbReference type="GO" id="GO:0017158">
    <property type="term" value="P:regulation of calcium ion-dependent exocytosis"/>
    <property type="evidence" value="ECO:0000318"/>
    <property type="project" value="GO_Central"/>
</dbReference>
<dbReference type="GO" id="GO:0016192">
    <property type="term" value="P:vesicle-mediated transport"/>
    <property type="evidence" value="ECO:0000318"/>
    <property type="project" value="GO_Central"/>
</dbReference>
<dbReference type="CDD" id="cd08390">
    <property type="entry name" value="C2A_Synaptotagmin-15-17"/>
    <property type="match status" value="1"/>
</dbReference>
<dbReference type="CDD" id="cd08409">
    <property type="entry name" value="C2B_Synaptotagmin-15"/>
    <property type="match status" value="1"/>
</dbReference>
<dbReference type="FunFam" id="2.60.40.150:FF:000161">
    <property type="entry name" value="Synaptotagmin 15"/>
    <property type="match status" value="1"/>
</dbReference>
<dbReference type="FunFam" id="2.60.40.150:FF:000162">
    <property type="entry name" value="Synaptotagmin-15"/>
    <property type="match status" value="1"/>
</dbReference>
<dbReference type="Gene3D" id="2.60.40.150">
    <property type="entry name" value="C2 domain"/>
    <property type="match status" value="2"/>
</dbReference>
<dbReference type="InterPro" id="IPR000008">
    <property type="entry name" value="C2_dom"/>
</dbReference>
<dbReference type="InterPro" id="IPR035892">
    <property type="entry name" value="C2_domain_sf"/>
</dbReference>
<dbReference type="InterPro" id="IPR047897">
    <property type="entry name" value="Synaptotagmin-15/17_C2A"/>
</dbReference>
<dbReference type="PANTHER" id="PTHR10024">
    <property type="entry name" value="SYNAPTOTAGMIN"/>
    <property type="match status" value="1"/>
</dbReference>
<dbReference type="PANTHER" id="PTHR10024:SF234">
    <property type="entry name" value="SYNAPTOTAGMIN-15-RELATED"/>
    <property type="match status" value="1"/>
</dbReference>
<dbReference type="Pfam" id="PF00168">
    <property type="entry name" value="C2"/>
    <property type="match status" value="2"/>
</dbReference>
<dbReference type="SMART" id="SM00239">
    <property type="entry name" value="C2"/>
    <property type="match status" value="2"/>
</dbReference>
<dbReference type="SUPFAM" id="SSF49562">
    <property type="entry name" value="C2 domain (Calcium/lipid-binding domain, CaLB)"/>
    <property type="match status" value="2"/>
</dbReference>
<dbReference type="PROSITE" id="PS50004">
    <property type="entry name" value="C2"/>
    <property type="match status" value="2"/>
</dbReference>
<evidence type="ECO:0000250" key="1"/>
<evidence type="ECO:0000255" key="2"/>
<evidence type="ECO:0000255" key="3">
    <source>
        <dbReference type="PROSITE-ProRule" id="PRU00041"/>
    </source>
</evidence>
<evidence type="ECO:0000256" key="4">
    <source>
        <dbReference type="SAM" id="MobiDB-lite"/>
    </source>
</evidence>
<evidence type="ECO:0000303" key="5">
    <source>
    </source>
</evidence>
<evidence type="ECO:0000303" key="6">
    <source>
    </source>
</evidence>
<evidence type="ECO:0000303" key="7">
    <source>
    </source>
</evidence>
<evidence type="ECO:0000305" key="8"/>
<accession>Q9BQS2</accession>
<accession>A5D6W8</accession>
<accession>Q5VY53</accession>
<accession>Q5VY55</accession>
<accession>Q7Z439</accession>
<accession>Q7Z440</accession>
<sequence length="421" mass="47375">MAEQLALVIGGTIGGLLLLLLIGASCCLWRRFCATLTYEELPGTPAMATTAASSGQRDRPCQPHARTQLSRPPAVPFVVPPTLQGRDWVPLHSGEWADAPWDPCPASELLPHTSSGGLGDACMVGAINPELYKFPEDKSETDFPDGCLGRLWFSVEYEQEAERLLVGLIKAQHLQAPSETCSPLVKLYLLPDERRFLQSKTKRKTSNPQFDEHFIFQVSSKTITQRVLKFSVYHVDRQRKHQLLGQVLFPLKNETLVGDCRRVIWRDLEAESLEPPSEFGDLQFCLSYNDYLSRLTVVVLRAKGLRLQEDRGIVSVFVKVSLMNHNKFVKCKKTSAVLGSINPVYNETFSFKADATELDTASLSLTVVQNMEGDKSQQLGRVVVGPYMYTRGRELEHWDEMLSKPKELVKRWHALCRTTEP</sequence>
<feature type="chain" id="PRO_0000183980" description="Synaptotagmin-15">
    <location>
        <begin position="1"/>
        <end position="421"/>
    </location>
</feature>
<feature type="topological domain" description="Extracellular" evidence="1">
    <location>
        <begin position="1"/>
        <end position="4"/>
    </location>
</feature>
<feature type="transmembrane region" description="Helical; Signal-anchor for type III membrane protein" evidence="2">
    <location>
        <begin position="5"/>
        <end position="29"/>
    </location>
</feature>
<feature type="topological domain" description="Cytoplasmic" evidence="2">
    <location>
        <begin position="30"/>
        <end position="421"/>
    </location>
</feature>
<feature type="domain" description="C2 1" evidence="3">
    <location>
        <begin position="147"/>
        <end position="264"/>
    </location>
</feature>
<feature type="domain" description="C2 2" evidence="3">
    <location>
        <begin position="278"/>
        <end position="399"/>
    </location>
</feature>
<feature type="region of interest" description="Disordered" evidence="4">
    <location>
        <begin position="47"/>
        <end position="68"/>
    </location>
</feature>
<feature type="splice variant" id="VSP_008643" description="In isoform 3." evidence="6">
    <original>MAEQLALVIGGTIGGLLLLLLIGASCCLWRRFCATLTYEELPGTPAMATTAASSGQRDRPCQPHARTQLSR</original>
    <variation>MGVVLLPHPAPSRREPLAPLAPGTRPGWSPAVSGSSRSALRPSTAGPGPGPGTGWGGTAASGRWVPAPAVHCAAPRAAAGHQQHHGPPLCSPDGAPRRFKRRPGSPAPAAQTGETSLREQPHGG</variation>
    <location>
        <begin position="1"/>
        <end position="71"/>
    </location>
</feature>
<feature type="splice variant" id="VSP_008644" description="In isoform 4." evidence="6">
    <original>KTSAVLGSINPVYNET</original>
    <variation>PGPGLGEESRGSLNLK</variation>
    <location>
        <begin position="333"/>
        <end position="348"/>
    </location>
</feature>
<feature type="splice variant" id="VSP_008645" description="In isoform 4." evidence="6">
    <location>
        <begin position="349"/>
        <end position="421"/>
    </location>
</feature>
<feature type="splice variant" id="VSP_008646" description="In isoform 2." evidence="5 7">
    <original>SQQLGRVVVGPYMYTRGRELEHWDEMLSKPKELVKRWHALCRTTEP</original>
    <variation>QATTVELFLFHLTSG</variation>
    <location>
        <begin position="376"/>
        <end position="421"/>
    </location>
</feature>
<feature type="sequence conflict" description="In Ref. 2; BAC85479." evidence="8" ref="2">
    <original>Q</original>
    <variation>R</variation>
    <location>
        <position position="246"/>
    </location>
</feature>
<feature type="sequence conflict" description="In Ref. 1; BAC76817/BAC76818 and 2; BAC86979." evidence="8" ref="1 2">
    <original>E</original>
    <variation>D</variation>
    <location>
        <position position="309"/>
    </location>
</feature>
<proteinExistence type="evidence at protein level"/>
<name>SYT15_HUMAN</name>
<reference key="1">
    <citation type="journal article" date="2003" name="Biochem. Biophys. Res. Commun.">
        <title>Molecular cloning and characterization of human, rat, and mouse synaptotagmin XV.</title>
        <authorList>
            <person name="Fukuda M."/>
        </authorList>
    </citation>
    <scope>NUCLEOTIDE SEQUENCE [MRNA] (ISOFORMS 1 AND 2)</scope>
    <source>
        <tissue>Heart</tissue>
    </source>
</reference>
<reference key="2">
    <citation type="journal article" date="2004" name="Nat. Genet.">
        <title>Complete sequencing and characterization of 21,243 full-length human cDNAs.</title>
        <authorList>
            <person name="Ota T."/>
            <person name="Suzuki Y."/>
            <person name="Nishikawa T."/>
            <person name="Otsuki T."/>
            <person name="Sugiyama T."/>
            <person name="Irie R."/>
            <person name="Wakamatsu A."/>
            <person name="Hayashi K."/>
            <person name="Sato H."/>
            <person name="Nagai K."/>
            <person name="Kimura K."/>
            <person name="Makita H."/>
            <person name="Sekine M."/>
            <person name="Obayashi M."/>
            <person name="Nishi T."/>
            <person name="Shibahara T."/>
            <person name="Tanaka T."/>
            <person name="Ishii S."/>
            <person name="Yamamoto J."/>
            <person name="Saito K."/>
            <person name="Kawai Y."/>
            <person name="Isono Y."/>
            <person name="Nakamura Y."/>
            <person name="Nagahari K."/>
            <person name="Murakami K."/>
            <person name="Yasuda T."/>
            <person name="Iwayanagi T."/>
            <person name="Wagatsuma M."/>
            <person name="Shiratori A."/>
            <person name="Sudo H."/>
            <person name="Hosoiri T."/>
            <person name="Kaku Y."/>
            <person name="Kodaira H."/>
            <person name="Kondo H."/>
            <person name="Sugawara M."/>
            <person name="Takahashi M."/>
            <person name="Kanda K."/>
            <person name="Yokoi T."/>
            <person name="Furuya T."/>
            <person name="Kikkawa E."/>
            <person name="Omura Y."/>
            <person name="Abe K."/>
            <person name="Kamihara K."/>
            <person name="Katsuta N."/>
            <person name="Sato K."/>
            <person name="Tanikawa M."/>
            <person name="Yamazaki M."/>
            <person name="Ninomiya K."/>
            <person name="Ishibashi T."/>
            <person name="Yamashita H."/>
            <person name="Murakawa K."/>
            <person name="Fujimori K."/>
            <person name="Tanai H."/>
            <person name="Kimata M."/>
            <person name="Watanabe M."/>
            <person name="Hiraoka S."/>
            <person name="Chiba Y."/>
            <person name="Ishida S."/>
            <person name="Ono Y."/>
            <person name="Takiguchi S."/>
            <person name="Watanabe S."/>
            <person name="Yosida M."/>
            <person name="Hotuta T."/>
            <person name="Kusano J."/>
            <person name="Kanehori K."/>
            <person name="Takahashi-Fujii A."/>
            <person name="Hara H."/>
            <person name="Tanase T.-O."/>
            <person name="Nomura Y."/>
            <person name="Togiya S."/>
            <person name="Komai F."/>
            <person name="Hara R."/>
            <person name="Takeuchi K."/>
            <person name="Arita M."/>
            <person name="Imose N."/>
            <person name="Musashino K."/>
            <person name="Yuuki H."/>
            <person name="Oshima A."/>
            <person name="Sasaki N."/>
            <person name="Aotsuka S."/>
            <person name="Yoshikawa Y."/>
            <person name="Matsunawa H."/>
            <person name="Ichihara T."/>
            <person name="Shiohata N."/>
            <person name="Sano S."/>
            <person name="Moriya S."/>
            <person name="Momiyama H."/>
            <person name="Satoh N."/>
            <person name="Takami S."/>
            <person name="Terashima Y."/>
            <person name="Suzuki O."/>
            <person name="Nakagawa S."/>
            <person name="Senoh A."/>
            <person name="Mizoguchi H."/>
            <person name="Goto Y."/>
            <person name="Shimizu F."/>
            <person name="Wakebe H."/>
            <person name="Hishigaki H."/>
            <person name="Watanabe T."/>
            <person name="Sugiyama A."/>
            <person name="Takemoto M."/>
            <person name="Kawakami B."/>
            <person name="Yamazaki M."/>
            <person name="Watanabe K."/>
            <person name="Kumagai A."/>
            <person name="Itakura S."/>
            <person name="Fukuzumi Y."/>
            <person name="Fujimori Y."/>
            <person name="Komiyama M."/>
            <person name="Tashiro H."/>
            <person name="Tanigami A."/>
            <person name="Fujiwara T."/>
            <person name="Ono T."/>
            <person name="Yamada K."/>
            <person name="Fujii Y."/>
            <person name="Ozaki K."/>
            <person name="Hirao M."/>
            <person name="Ohmori Y."/>
            <person name="Kawabata A."/>
            <person name="Hikiji T."/>
            <person name="Kobatake N."/>
            <person name="Inagaki H."/>
            <person name="Ikema Y."/>
            <person name="Okamoto S."/>
            <person name="Okitani R."/>
            <person name="Kawakami T."/>
            <person name="Noguchi S."/>
            <person name="Itoh T."/>
            <person name="Shigeta K."/>
            <person name="Senba T."/>
            <person name="Matsumura K."/>
            <person name="Nakajima Y."/>
            <person name="Mizuno T."/>
            <person name="Morinaga M."/>
            <person name="Sasaki M."/>
            <person name="Togashi T."/>
            <person name="Oyama M."/>
            <person name="Hata H."/>
            <person name="Watanabe M."/>
            <person name="Komatsu T."/>
            <person name="Mizushima-Sugano J."/>
            <person name="Satoh T."/>
            <person name="Shirai Y."/>
            <person name="Takahashi Y."/>
            <person name="Nakagawa K."/>
            <person name="Okumura K."/>
            <person name="Nagase T."/>
            <person name="Nomura N."/>
            <person name="Kikuchi H."/>
            <person name="Masuho Y."/>
            <person name="Yamashita R."/>
            <person name="Nakai K."/>
            <person name="Yada T."/>
            <person name="Nakamura Y."/>
            <person name="Ohara O."/>
            <person name="Isogai T."/>
            <person name="Sugano S."/>
        </authorList>
    </citation>
    <scope>NUCLEOTIDE SEQUENCE [LARGE SCALE MRNA] (ISOFORMS 3 AND 4)</scope>
    <source>
        <tissue>Cerebellum</tissue>
        <tissue>Thalamus</tissue>
    </source>
</reference>
<reference key="3">
    <citation type="journal article" date="2004" name="Nature">
        <title>The DNA sequence and comparative analysis of human chromosome 10.</title>
        <authorList>
            <person name="Deloukas P."/>
            <person name="Earthrowl M.E."/>
            <person name="Grafham D.V."/>
            <person name="Rubenfield M."/>
            <person name="French L."/>
            <person name="Steward C.A."/>
            <person name="Sims S.K."/>
            <person name="Jones M.C."/>
            <person name="Searle S."/>
            <person name="Scott C."/>
            <person name="Howe K."/>
            <person name="Hunt S.E."/>
            <person name="Andrews T.D."/>
            <person name="Gilbert J.G.R."/>
            <person name="Swarbreck D."/>
            <person name="Ashurst J.L."/>
            <person name="Taylor A."/>
            <person name="Battles J."/>
            <person name="Bird C.P."/>
            <person name="Ainscough R."/>
            <person name="Almeida J.P."/>
            <person name="Ashwell R.I.S."/>
            <person name="Ambrose K.D."/>
            <person name="Babbage A.K."/>
            <person name="Bagguley C.L."/>
            <person name="Bailey J."/>
            <person name="Banerjee R."/>
            <person name="Bates K."/>
            <person name="Beasley H."/>
            <person name="Bray-Allen S."/>
            <person name="Brown A.J."/>
            <person name="Brown J.Y."/>
            <person name="Burford D.C."/>
            <person name="Burrill W."/>
            <person name="Burton J."/>
            <person name="Cahill P."/>
            <person name="Camire D."/>
            <person name="Carter N.P."/>
            <person name="Chapman J.C."/>
            <person name="Clark S.Y."/>
            <person name="Clarke G."/>
            <person name="Clee C.M."/>
            <person name="Clegg S."/>
            <person name="Corby N."/>
            <person name="Coulson A."/>
            <person name="Dhami P."/>
            <person name="Dutta I."/>
            <person name="Dunn M."/>
            <person name="Faulkner L."/>
            <person name="Frankish A."/>
            <person name="Frankland J.A."/>
            <person name="Garner P."/>
            <person name="Garnett J."/>
            <person name="Gribble S."/>
            <person name="Griffiths C."/>
            <person name="Grocock R."/>
            <person name="Gustafson E."/>
            <person name="Hammond S."/>
            <person name="Harley J.L."/>
            <person name="Hart E."/>
            <person name="Heath P.D."/>
            <person name="Ho T.P."/>
            <person name="Hopkins B."/>
            <person name="Horne J."/>
            <person name="Howden P.J."/>
            <person name="Huckle E."/>
            <person name="Hynds C."/>
            <person name="Johnson C."/>
            <person name="Johnson D."/>
            <person name="Kana A."/>
            <person name="Kay M."/>
            <person name="Kimberley A.M."/>
            <person name="Kershaw J.K."/>
            <person name="Kokkinaki M."/>
            <person name="Laird G.K."/>
            <person name="Lawlor S."/>
            <person name="Lee H.M."/>
            <person name="Leongamornlert D.A."/>
            <person name="Laird G."/>
            <person name="Lloyd C."/>
            <person name="Lloyd D.M."/>
            <person name="Loveland J."/>
            <person name="Lovell J."/>
            <person name="McLaren S."/>
            <person name="McLay K.E."/>
            <person name="McMurray A."/>
            <person name="Mashreghi-Mohammadi M."/>
            <person name="Matthews L."/>
            <person name="Milne S."/>
            <person name="Nickerson T."/>
            <person name="Nguyen M."/>
            <person name="Overton-Larty E."/>
            <person name="Palmer S.A."/>
            <person name="Pearce A.V."/>
            <person name="Peck A.I."/>
            <person name="Pelan S."/>
            <person name="Phillimore B."/>
            <person name="Porter K."/>
            <person name="Rice C.M."/>
            <person name="Rogosin A."/>
            <person name="Ross M.T."/>
            <person name="Sarafidou T."/>
            <person name="Sehra H.K."/>
            <person name="Shownkeen R."/>
            <person name="Skuce C.D."/>
            <person name="Smith M."/>
            <person name="Standring L."/>
            <person name="Sycamore N."/>
            <person name="Tester J."/>
            <person name="Thorpe A."/>
            <person name="Torcasso W."/>
            <person name="Tracey A."/>
            <person name="Tromans A."/>
            <person name="Tsolas J."/>
            <person name="Wall M."/>
            <person name="Walsh J."/>
            <person name="Wang H."/>
            <person name="Weinstock K."/>
            <person name="West A.P."/>
            <person name="Willey D.L."/>
            <person name="Whitehead S.L."/>
            <person name="Wilming L."/>
            <person name="Wray P.W."/>
            <person name="Young L."/>
            <person name="Chen Y."/>
            <person name="Lovering R.C."/>
            <person name="Moschonas N.K."/>
            <person name="Siebert R."/>
            <person name="Fechtel K."/>
            <person name="Bentley D."/>
            <person name="Durbin R.M."/>
            <person name="Hubbard T."/>
            <person name="Doucette-Stamm L."/>
            <person name="Beck S."/>
            <person name="Smith D.R."/>
            <person name="Rogers J."/>
        </authorList>
    </citation>
    <scope>NUCLEOTIDE SEQUENCE [LARGE SCALE GENOMIC DNA]</scope>
</reference>
<reference key="4">
    <citation type="journal article" date="2004" name="Genome Res.">
        <title>The status, quality, and expansion of the NIH full-length cDNA project: the Mammalian Gene Collection (MGC).</title>
        <authorList>
            <consortium name="The MGC Project Team"/>
        </authorList>
    </citation>
    <scope>NUCLEOTIDE SEQUENCE [LARGE SCALE MRNA] (ISOFORM 2)</scope>
</reference>
<reference key="5">
    <citation type="journal article" date="2001" name="Genomics">
        <title>Genomic analysis of synaptotagmin genes.</title>
        <authorList>
            <person name="Craxton M.A."/>
        </authorList>
    </citation>
    <scope>NUCLEOTIDE SEQUENCE [MRNA] OF 211-374 (ISOFORMS 1/2/3/4)</scope>
    <source>
        <tissue>Brain</tissue>
    </source>
</reference>